<protein>
    <recommendedName>
        <fullName evidence="1">Arginine repressor</fullName>
    </recommendedName>
</protein>
<comment type="function">
    <text evidence="1">Regulates arginine biosynthesis genes.</text>
</comment>
<comment type="pathway">
    <text>Amino-acid biosynthesis; L-arginine biosynthesis [regulation].</text>
</comment>
<comment type="subcellular location">
    <subcellularLocation>
        <location evidence="1">Cytoplasm</location>
    </subcellularLocation>
</comment>
<comment type="similarity">
    <text evidence="1">Belongs to the ArgR family.</text>
</comment>
<name>ARGR_CLOB8</name>
<evidence type="ECO:0000255" key="1">
    <source>
        <dbReference type="HAMAP-Rule" id="MF_00173"/>
    </source>
</evidence>
<gene>
    <name evidence="1" type="primary">argR</name>
    <name type="ordered locus">Cbei_1709</name>
</gene>
<sequence>MKSKRHTKILEIIGSREIETQEELADALKKEGFDVTQATVSRDIKNLKLIKMQSTNGKSKYAVSTGEQKNIIDRLSNILANTVLSVENVDKMVVIKTITGSAPITAEAIDNLESADIAGTVAGDNTIFILVRSLESAEDLVDKIRKRMSS</sequence>
<dbReference type="EMBL" id="CP000721">
    <property type="protein sequence ID" value="ABR33881.1"/>
    <property type="molecule type" value="Genomic_DNA"/>
</dbReference>
<dbReference type="RefSeq" id="WP_011969033.1">
    <property type="nucleotide sequence ID" value="NC_009617.1"/>
</dbReference>
<dbReference type="SMR" id="A6LU51"/>
<dbReference type="GeneID" id="66344600"/>
<dbReference type="KEGG" id="cbe:Cbei_1709"/>
<dbReference type="eggNOG" id="COG1438">
    <property type="taxonomic scope" value="Bacteria"/>
</dbReference>
<dbReference type="HOGENOM" id="CLU_097103_3_0_9"/>
<dbReference type="UniPathway" id="UPA00068"/>
<dbReference type="Proteomes" id="UP000000565">
    <property type="component" value="Chromosome"/>
</dbReference>
<dbReference type="GO" id="GO:0005737">
    <property type="term" value="C:cytoplasm"/>
    <property type="evidence" value="ECO:0007669"/>
    <property type="project" value="UniProtKB-SubCell"/>
</dbReference>
<dbReference type="GO" id="GO:0034618">
    <property type="term" value="F:arginine binding"/>
    <property type="evidence" value="ECO:0007669"/>
    <property type="project" value="InterPro"/>
</dbReference>
<dbReference type="GO" id="GO:0003677">
    <property type="term" value="F:DNA binding"/>
    <property type="evidence" value="ECO:0007669"/>
    <property type="project" value="UniProtKB-KW"/>
</dbReference>
<dbReference type="GO" id="GO:0003700">
    <property type="term" value="F:DNA-binding transcription factor activity"/>
    <property type="evidence" value="ECO:0007669"/>
    <property type="project" value="UniProtKB-UniRule"/>
</dbReference>
<dbReference type="GO" id="GO:0006526">
    <property type="term" value="P:L-arginine biosynthetic process"/>
    <property type="evidence" value="ECO:0007669"/>
    <property type="project" value="UniProtKB-UniPathway"/>
</dbReference>
<dbReference type="GO" id="GO:0051259">
    <property type="term" value="P:protein complex oligomerization"/>
    <property type="evidence" value="ECO:0007669"/>
    <property type="project" value="InterPro"/>
</dbReference>
<dbReference type="GO" id="GO:1900079">
    <property type="term" value="P:regulation of arginine biosynthetic process"/>
    <property type="evidence" value="ECO:0007669"/>
    <property type="project" value="UniProtKB-UniRule"/>
</dbReference>
<dbReference type="Gene3D" id="3.30.1360.40">
    <property type="match status" value="1"/>
</dbReference>
<dbReference type="Gene3D" id="1.10.10.10">
    <property type="entry name" value="Winged helix-like DNA-binding domain superfamily/Winged helix DNA-binding domain"/>
    <property type="match status" value="1"/>
</dbReference>
<dbReference type="HAMAP" id="MF_00173">
    <property type="entry name" value="Arg_repressor"/>
    <property type="match status" value="1"/>
</dbReference>
<dbReference type="InterPro" id="IPR001669">
    <property type="entry name" value="Arg_repress"/>
</dbReference>
<dbReference type="InterPro" id="IPR020899">
    <property type="entry name" value="Arg_repress_C"/>
</dbReference>
<dbReference type="InterPro" id="IPR036251">
    <property type="entry name" value="Arg_repress_C_sf"/>
</dbReference>
<dbReference type="InterPro" id="IPR020900">
    <property type="entry name" value="Arg_repress_DNA-bd"/>
</dbReference>
<dbReference type="InterPro" id="IPR036388">
    <property type="entry name" value="WH-like_DNA-bd_sf"/>
</dbReference>
<dbReference type="InterPro" id="IPR036390">
    <property type="entry name" value="WH_DNA-bd_sf"/>
</dbReference>
<dbReference type="NCBIfam" id="TIGR01529">
    <property type="entry name" value="argR_whole"/>
    <property type="match status" value="1"/>
</dbReference>
<dbReference type="NCBIfam" id="NF001680">
    <property type="entry name" value="PRK00441.1"/>
    <property type="match status" value="1"/>
</dbReference>
<dbReference type="PANTHER" id="PTHR34471">
    <property type="entry name" value="ARGININE REPRESSOR"/>
    <property type="match status" value="1"/>
</dbReference>
<dbReference type="PANTHER" id="PTHR34471:SF1">
    <property type="entry name" value="ARGININE REPRESSOR"/>
    <property type="match status" value="1"/>
</dbReference>
<dbReference type="Pfam" id="PF01316">
    <property type="entry name" value="Arg_repressor"/>
    <property type="match status" value="1"/>
</dbReference>
<dbReference type="Pfam" id="PF02863">
    <property type="entry name" value="Arg_repressor_C"/>
    <property type="match status" value="1"/>
</dbReference>
<dbReference type="PRINTS" id="PR01467">
    <property type="entry name" value="ARGREPRESSOR"/>
</dbReference>
<dbReference type="SUPFAM" id="SSF55252">
    <property type="entry name" value="C-terminal domain of arginine repressor"/>
    <property type="match status" value="1"/>
</dbReference>
<dbReference type="SUPFAM" id="SSF46785">
    <property type="entry name" value="Winged helix' DNA-binding domain"/>
    <property type="match status" value="1"/>
</dbReference>
<proteinExistence type="inferred from homology"/>
<accession>A6LU51</accession>
<reference key="1">
    <citation type="submission" date="2007-06" db="EMBL/GenBank/DDBJ databases">
        <title>Complete sequence of Clostridium beijerinckii NCIMB 8052.</title>
        <authorList>
            <consortium name="US DOE Joint Genome Institute"/>
            <person name="Copeland A."/>
            <person name="Lucas S."/>
            <person name="Lapidus A."/>
            <person name="Barry K."/>
            <person name="Detter J.C."/>
            <person name="Glavina del Rio T."/>
            <person name="Hammon N."/>
            <person name="Israni S."/>
            <person name="Dalin E."/>
            <person name="Tice H."/>
            <person name="Pitluck S."/>
            <person name="Sims D."/>
            <person name="Brettin T."/>
            <person name="Bruce D."/>
            <person name="Tapia R."/>
            <person name="Brainard J."/>
            <person name="Schmutz J."/>
            <person name="Larimer F."/>
            <person name="Land M."/>
            <person name="Hauser L."/>
            <person name="Kyrpides N."/>
            <person name="Mikhailova N."/>
            <person name="Bennet G."/>
            <person name="Cann I."/>
            <person name="Chen J.-S."/>
            <person name="Contreras A.L."/>
            <person name="Jones D."/>
            <person name="Kashket E."/>
            <person name="Mitchell W."/>
            <person name="Stoddard S."/>
            <person name="Schwarz W."/>
            <person name="Qureshi N."/>
            <person name="Young M."/>
            <person name="Shi Z."/>
            <person name="Ezeji T."/>
            <person name="White B."/>
            <person name="Blaschek H."/>
            <person name="Richardson P."/>
        </authorList>
    </citation>
    <scope>NUCLEOTIDE SEQUENCE [LARGE SCALE GENOMIC DNA]</scope>
    <source>
        <strain>ATCC 51743 / NCIMB 8052</strain>
    </source>
</reference>
<feature type="chain" id="PRO_1000077122" description="Arginine repressor">
    <location>
        <begin position="1"/>
        <end position="150"/>
    </location>
</feature>
<keyword id="KW-0028">Amino-acid biosynthesis</keyword>
<keyword id="KW-0055">Arginine biosynthesis</keyword>
<keyword id="KW-0963">Cytoplasm</keyword>
<keyword id="KW-0238">DNA-binding</keyword>
<keyword id="KW-0678">Repressor</keyword>
<keyword id="KW-0804">Transcription</keyword>
<keyword id="KW-0805">Transcription regulation</keyword>
<organism>
    <name type="scientific">Clostridium beijerinckii (strain ATCC 51743 / NCIMB 8052)</name>
    <name type="common">Clostridium acetobutylicum</name>
    <dbReference type="NCBI Taxonomy" id="290402"/>
    <lineage>
        <taxon>Bacteria</taxon>
        <taxon>Bacillati</taxon>
        <taxon>Bacillota</taxon>
        <taxon>Clostridia</taxon>
        <taxon>Eubacteriales</taxon>
        <taxon>Clostridiaceae</taxon>
        <taxon>Clostridium</taxon>
    </lineage>
</organism>